<dbReference type="EMBL" id="EU926022">
    <property type="protein sequence ID" value="ACI41354.1"/>
    <property type="molecule type" value="mRNA"/>
</dbReference>
<dbReference type="EMBL" id="FM864026">
    <property type="protein sequence ID" value="CAS03624.1"/>
    <property type="molecule type" value="mRNA"/>
</dbReference>
<dbReference type="SMR" id="B6DCT8"/>
<dbReference type="ArachnoServer" id="AS000966">
    <property type="toxin name" value="U4-lycotoxin-Ls1a"/>
</dbReference>
<dbReference type="GO" id="GO:0005576">
    <property type="term" value="C:extracellular region"/>
    <property type="evidence" value="ECO:0007669"/>
    <property type="project" value="UniProtKB-SubCell"/>
</dbReference>
<dbReference type="GO" id="GO:0005246">
    <property type="term" value="F:calcium channel regulator activity"/>
    <property type="evidence" value="ECO:0007669"/>
    <property type="project" value="UniProtKB-KW"/>
</dbReference>
<dbReference type="GO" id="GO:0090729">
    <property type="term" value="F:toxin activity"/>
    <property type="evidence" value="ECO:0007669"/>
    <property type="project" value="UniProtKB-KW"/>
</dbReference>
<dbReference type="InterPro" id="IPR019553">
    <property type="entry name" value="Spider_toxin_CSTX_knottin"/>
</dbReference>
<dbReference type="InterPro" id="IPR011142">
    <property type="entry name" value="Spider_toxin_CSTX_Knottin_CS"/>
</dbReference>
<dbReference type="Pfam" id="PF10530">
    <property type="entry name" value="Toxin_35"/>
    <property type="match status" value="1"/>
</dbReference>
<dbReference type="PROSITE" id="PS60029">
    <property type="entry name" value="SPIDER_CSTX"/>
    <property type="match status" value="1"/>
</dbReference>
<sequence length="109" mass="12392">MKVLVLFSVLFLTLFSYSSTEAIDELDSDAEEDMLSLMANEQVRAKACTPRLHDCSHDRHSCCRGELFKDVCYCFYPEGEDKTEVCSCQQPKSHKYIEKVVDKAKTVVG</sequence>
<feature type="signal peptide" evidence="3">
    <location>
        <begin position="1"/>
        <end position="22"/>
    </location>
</feature>
<feature type="propeptide" id="PRO_0000401689" evidence="1">
    <location>
        <begin position="23"/>
        <end position="44"/>
    </location>
</feature>
<feature type="chain" id="PRO_0000401690" description="U4-lycotoxin-Ls1a">
    <location>
        <begin position="45"/>
        <end position="109"/>
    </location>
</feature>
<feature type="region of interest" description="Knottin domain" evidence="2">
    <location>
        <begin position="45"/>
        <end position="88"/>
    </location>
</feature>
<feature type="region of interest" description="Linear cationic cytotoxin domain" evidence="2">
    <location>
        <begin position="89"/>
        <end position="108"/>
    </location>
</feature>
<feature type="disulfide bond" evidence="2">
    <location>
        <begin position="48"/>
        <end position="63"/>
    </location>
</feature>
<feature type="disulfide bond" evidence="2">
    <location>
        <begin position="55"/>
        <end position="72"/>
    </location>
</feature>
<feature type="disulfide bond" evidence="2">
    <location>
        <begin position="62"/>
        <end position="88"/>
    </location>
</feature>
<feature type="disulfide bond" evidence="2">
    <location>
        <begin position="74"/>
        <end position="86"/>
    </location>
</feature>
<organism>
    <name type="scientific">Lycosa singoriensis</name>
    <name type="common">Wolf spider</name>
    <name type="synonym">Aranea singoriensis</name>
    <dbReference type="NCBI Taxonomy" id="434756"/>
    <lineage>
        <taxon>Eukaryota</taxon>
        <taxon>Metazoa</taxon>
        <taxon>Ecdysozoa</taxon>
        <taxon>Arthropoda</taxon>
        <taxon>Chelicerata</taxon>
        <taxon>Arachnida</taxon>
        <taxon>Araneae</taxon>
        <taxon>Araneomorphae</taxon>
        <taxon>Entelegynae</taxon>
        <taxon>Lycosoidea</taxon>
        <taxon>Lycosidae</taxon>
        <taxon>Lycosa</taxon>
    </lineage>
</organism>
<protein>
    <recommendedName>
        <fullName evidence="4">U4-lycotoxin-Ls1a</fullName>
        <shortName evidence="4">U4-LCTX-Ls1a</shortName>
    </recommendedName>
    <alternativeName>
        <fullName>Toxin-like structure LSTX-C6</fullName>
    </alternativeName>
</protein>
<comment type="function">
    <text evidence="2">Enhances the high-affinity desensitization of human P2RX3 purinoceptors.</text>
</comment>
<comment type="subcellular location">
    <subcellularLocation>
        <location evidence="1">Secreted</location>
    </subcellularLocation>
</comment>
<comment type="tissue specificity">
    <text evidence="5">Expressed by the venom gland.</text>
</comment>
<comment type="domain">
    <text evidence="2">The toxin is composed of 2 domains: a highly rigid N-terminal inhibitor cystine knot (knottin) domain and a rather flexible C-terminal linear cationic cytotoxin domain that forms amphiphilic alpha-helices.</text>
</comment>
<comment type="domain">
    <text evidence="2">The presence of a 'disulfide through disulfide knot' structurally defines this protein as a knottin.</text>
</comment>
<comment type="similarity">
    <text evidence="4">Belongs to the neurotoxin 19 (CSTX) family. 05 (U4-Lctx) subfamily.</text>
</comment>
<evidence type="ECO:0000250" key="1"/>
<evidence type="ECO:0000250" key="2">
    <source>
        <dbReference type="UniProtKB" id="B3EWH0"/>
    </source>
</evidence>
<evidence type="ECO:0000255" key="3"/>
<evidence type="ECO:0000305" key="4"/>
<evidence type="ECO:0000305" key="5">
    <source>
    </source>
</evidence>
<name>TX406_LYCSI</name>
<keyword id="KW-0108">Calcium channel impairing toxin</keyword>
<keyword id="KW-1015">Disulfide bond</keyword>
<keyword id="KW-0872">Ion channel impairing toxin</keyword>
<keyword id="KW-0960">Knottin</keyword>
<keyword id="KW-0964">Secreted</keyword>
<keyword id="KW-0732">Signal</keyword>
<keyword id="KW-0800">Toxin</keyword>
<proteinExistence type="inferred from homology"/>
<accession>B6DCT8</accession>
<reference key="1">
    <citation type="journal article" date="2010" name="Zoology">
        <title>Transcriptome analysis of the venom glands of the Chinese wolf spider Lycosa singoriensis.</title>
        <authorList>
            <person name="Zhang Y."/>
            <person name="Chen J."/>
            <person name="Tang X."/>
            <person name="Wang F."/>
            <person name="Jiang L."/>
            <person name="Xiong X."/>
            <person name="Wang M."/>
            <person name="Rong M."/>
            <person name="Liu Z."/>
            <person name="Liang S."/>
        </authorList>
    </citation>
    <scope>NUCLEOTIDE SEQUENCE [LARGE SCALE MRNA]</scope>
    <source>
        <tissue>Venom gland</tissue>
    </source>
</reference>